<gene>
    <name type="primary">Nek5</name>
</gene>
<accession>Q7TSC3</accession>
<accession>Q8C6N6</accession>
<accession>Q8CCJ0</accession>
<reference key="1">
    <citation type="journal article" date="2005" name="Science">
        <title>The transcriptional landscape of the mammalian genome.</title>
        <authorList>
            <person name="Carninci P."/>
            <person name="Kasukawa T."/>
            <person name="Katayama S."/>
            <person name="Gough J."/>
            <person name="Frith M.C."/>
            <person name="Maeda N."/>
            <person name="Oyama R."/>
            <person name="Ravasi T."/>
            <person name="Lenhard B."/>
            <person name="Wells C."/>
            <person name="Kodzius R."/>
            <person name="Shimokawa K."/>
            <person name="Bajic V.B."/>
            <person name="Brenner S.E."/>
            <person name="Batalov S."/>
            <person name="Forrest A.R."/>
            <person name="Zavolan M."/>
            <person name="Davis M.J."/>
            <person name="Wilming L.G."/>
            <person name="Aidinis V."/>
            <person name="Allen J.E."/>
            <person name="Ambesi-Impiombato A."/>
            <person name="Apweiler R."/>
            <person name="Aturaliya R.N."/>
            <person name="Bailey T.L."/>
            <person name="Bansal M."/>
            <person name="Baxter L."/>
            <person name="Beisel K.W."/>
            <person name="Bersano T."/>
            <person name="Bono H."/>
            <person name="Chalk A.M."/>
            <person name="Chiu K.P."/>
            <person name="Choudhary V."/>
            <person name="Christoffels A."/>
            <person name="Clutterbuck D.R."/>
            <person name="Crowe M.L."/>
            <person name="Dalla E."/>
            <person name="Dalrymple B.P."/>
            <person name="de Bono B."/>
            <person name="Della Gatta G."/>
            <person name="di Bernardo D."/>
            <person name="Down T."/>
            <person name="Engstrom P."/>
            <person name="Fagiolini M."/>
            <person name="Faulkner G."/>
            <person name="Fletcher C.F."/>
            <person name="Fukushima T."/>
            <person name="Furuno M."/>
            <person name="Futaki S."/>
            <person name="Gariboldi M."/>
            <person name="Georgii-Hemming P."/>
            <person name="Gingeras T.R."/>
            <person name="Gojobori T."/>
            <person name="Green R.E."/>
            <person name="Gustincich S."/>
            <person name="Harbers M."/>
            <person name="Hayashi Y."/>
            <person name="Hensch T.K."/>
            <person name="Hirokawa N."/>
            <person name="Hill D."/>
            <person name="Huminiecki L."/>
            <person name="Iacono M."/>
            <person name="Ikeo K."/>
            <person name="Iwama A."/>
            <person name="Ishikawa T."/>
            <person name="Jakt M."/>
            <person name="Kanapin A."/>
            <person name="Katoh M."/>
            <person name="Kawasawa Y."/>
            <person name="Kelso J."/>
            <person name="Kitamura H."/>
            <person name="Kitano H."/>
            <person name="Kollias G."/>
            <person name="Krishnan S.P."/>
            <person name="Kruger A."/>
            <person name="Kummerfeld S.K."/>
            <person name="Kurochkin I.V."/>
            <person name="Lareau L.F."/>
            <person name="Lazarevic D."/>
            <person name="Lipovich L."/>
            <person name="Liu J."/>
            <person name="Liuni S."/>
            <person name="McWilliam S."/>
            <person name="Madan Babu M."/>
            <person name="Madera M."/>
            <person name="Marchionni L."/>
            <person name="Matsuda H."/>
            <person name="Matsuzawa S."/>
            <person name="Miki H."/>
            <person name="Mignone F."/>
            <person name="Miyake S."/>
            <person name="Morris K."/>
            <person name="Mottagui-Tabar S."/>
            <person name="Mulder N."/>
            <person name="Nakano N."/>
            <person name="Nakauchi H."/>
            <person name="Ng P."/>
            <person name="Nilsson R."/>
            <person name="Nishiguchi S."/>
            <person name="Nishikawa S."/>
            <person name="Nori F."/>
            <person name="Ohara O."/>
            <person name="Okazaki Y."/>
            <person name="Orlando V."/>
            <person name="Pang K.C."/>
            <person name="Pavan W.J."/>
            <person name="Pavesi G."/>
            <person name="Pesole G."/>
            <person name="Petrovsky N."/>
            <person name="Piazza S."/>
            <person name="Reed J."/>
            <person name="Reid J.F."/>
            <person name="Ring B.Z."/>
            <person name="Ringwald M."/>
            <person name="Rost B."/>
            <person name="Ruan Y."/>
            <person name="Salzberg S.L."/>
            <person name="Sandelin A."/>
            <person name="Schneider C."/>
            <person name="Schoenbach C."/>
            <person name="Sekiguchi K."/>
            <person name="Semple C.A."/>
            <person name="Seno S."/>
            <person name="Sessa L."/>
            <person name="Sheng Y."/>
            <person name="Shibata Y."/>
            <person name="Shimada H."/>
            <person name="Shimada K."/>
            <person name="Silva D."/>
            <person name="Sinclair B."/>
            <person name="Sperling S."/>
            <person name="Stupka E."/>
            <person name="Sugiura K."/>
            <person name="Sultana R."/>
            <person name="Takenaka Y."/>
            <person name="Taki K."/>
            <person name="Tammoja K."/>
            <person name="Tan S.L."/>
            <person name="Tang S."/>
            <person name="Taylor M.S."/>
            <person name="Tegner J."/>
            <person name="Teichmann S.A."/>
            <person name="Ueda H.R."/>
            <person name="van Nimwegen E."/>
            <person name="Verardo R."/>
            <person name="Wei C.L."/>
            <person name="Yagi K."/>
            <person name="Yamanishi H."/>
            <person name="Zabarovsky E."/>
            <person name="Zhu S."/>
            <person name="Zimmer A."/>
            <person name="Hide W."/>
            <person name="Bult C."/>
            <person name="Grimmond S.M."/>
            <person name="Teasdale R.D."/>
            <person name="Liu E.T."/>
            <person name="Brusic V."/>
            <person name="Quackenbush J."/>
            <person name="Wahlestedt C."/>
            <person name="Mattick J.S."/>
            <person name="Hume D.A."/>
            <person name="Kai C."/>
            <person name="Sasaki D."/>
            <person name="Tomaru Y."/>
            <person name="Fukuda S."/>
            <person name="Kanamori-Katayama M."/>
            <person name="Suzuki M."/>
            <person name="Aoki J."/>
            <person name="Arakawa T."/>
            <person name="Iida J."/>
            <person name="Imamura K."/>
            <person name="Itoh M."/>
            <person name="Kato T."/>
            <person name="Kawaji H."/>
            <person name="Kawagashira N."/>
            <person name="Kawashima T."/>
            <person name="Kojima M."/>
            <person name="Kondo S."/>
            <person name="Konno H."/>
            <person name="Nakano K."/>
            <person name="Ninomiya N."/>
            <person name="Nishio T."/>
            <person name="Okada M."/>
            <person name="Plessy C."/>
            <person name="Shibata K."/>
            <person name="Shiraki T."/>
            <person name="Suzuki S."/>
            <person name="Tagami M."/>
            <person name="Waki K."/>
            <person name="Watahiki A."/>
            <person name="Okamura-Oho Y."/>
            <person name="Suzuki H."/>
            <person name="Kawai J."/>
            <person name="Hayashizaki Y."/>
        </authorList>
    </citation>
    <scope>NUCLEOTIDE SEQUENCE [LARGE SCALE MRNA] (ISOFORMS 2 AND 3)</scope>
    <source>
        <strain>C57BL/6J</strain>
        <tissue>Cerebellum</tissue>
        <tissue>Oviduct</tissue>
    </source>
</reference>
<reference key="2">
    <citation type="journal article" date="2004" name="Genome Res.">
        <title>The status, quality, and expansion of the NIH full-length cDNA project: the Mammalian Gene Collection (MGC).</title>
        <authorList>
            <consortium name="The MGC Project Team"/>
        </authorList>
    </citation>
    <scope>NUCLEOTIDE SEQUENCE [LARGE SCALE MRNA] (ISOFORM 1)</scope>
    <source>
        <tissue>Olfactory epithelium</tissue>
    </source>
</reference>
<sequence length="627" mass="71790">MDNFHLIKIIGEGTFGKVYLAKDKSESSHCVIKEISLTKEKEASKNEVILLARMEHPNIVTFFSSFQENGRLFIVMEYCDGGDLMQRIQRQRGVMFSEDQILCWFVQISLGLKHIHDRKILHRDIKSQNIFLSKNGMVAKLGDFGTARTLNDSMELAQTCAGTPYYLSPEICQNRPYNNKTDIWSLGCVLYELCTLKHPFESNNFHHLVLKICQGRVAPISPHFSRDLQSLIPQLFRVSPQDRPSVTSLLKRPFLETLIARSLYPEVCSRRIQSHAHMENMAIGPTACWRVSPWSAAYLQRKFEAQQYKLKVERQLGLRPSSVEPHPNEGEKLQSHWEETKFQELQYRKNKMKDQEYWKQLEEIRQQYHNDMKEIKKKMGRELKRVVKFEISLDKCISEEDTVQENEAVDKLNATLSFEDGTKFQEHRCKEEHEDYTDRAFEELCGPEAEGFFQDVIAAENRRQWDAGAPHTLLRIMAMADVTSTCPTMPDDGQVIVMEGSVENGKQWWLDVPGTPCALAAECACSGSLSASKGETVMIKPQLPKEDQEKVEIATGIMVDDEQLEPGSDEDDIKFEESEDELRSEIIESLEKLAASTEEAEQAPSSSKNAEEPGEKEKTNLPVKKLQ</sequence>
<organism>
    <name type="scientific">Mus musculus</name>
    <name type="common">Mouse</name>
    <dbReference type="NCBI Taxonomy" id="10090"/>
    <lineage>
        <taxon>Eukaryota</taxon>
        <taxon>Metazoa</taxon>
        <taxon>Chordata</taxon>
        <taxon>Craniata</taxon>
        <taxon>Vertebrata</taxon>
        <taxon>Euteleostomi</taxon>
        <taxon>Mammalia</taxon>
        <taxon>Eutheria</taxon>
        <taxon>Euarchontoglires</taxon>
        <taxon>Glires</taxon>
        <taxon>Rodentia</taxon>
        <taxon>Myomorpha</taxon>
        <taxon>Muroidea</taxon>
        <taxon>Muridae</taxon>
        <taxon>Murinae</taxon>
        <taxon>Mus</taxon>
        <taxon>Mus</taxon>
    </lineage>
</organism>
<comment type="catalytic activity">
    <reaction>
        <text>L-seryl-[protein] + ATP = O-phospho-L-seryl-[protein] + ADP + H(+)</text>
        <dbReference type="Rhea" id="RHEA:17989"/>
        <dbReference type="Rhea" id="RHEA-COMP:9863"/>
        <dbReference type="Rhea" id="RHEA-COMP:11604"/>
        <dbReference type="ChEBI" id="CHEBI:15378"/>
        <dbReference type="ChEBI" id="CHEBI:29999"/>
        <dbReference type="ChEBI" id="CHEBI:30616"/>
        <dbReference type="ChEBI" id="CHEBI:83421"/>
        <dbReference type="ChEBI" id="CHEBI:456216"/>
        <dbReference type="EC" id="2.7.11.1"/>
    </reaction>
</comment>
<comment type="catalytic activity">
    <reaction>
        <text>L-threonyl-[protein] + ATP = O-phospho-L-threonyl-[protein] + ADP + H(+)</text>
        <dbReference type="Rhea" id="RHEA:46608"/>
        <dbReference type="Rhea" id="RHEA-COMP:11060"/>
        <dbReference type="Rhea" id="RHEA-COMP:11605"/>
        <dbReference type="ChEBI" id="CHEBI:15378"/>
        <dbReference type="ChEBI" id="CHEBI:30013"/>
        <dbReference type="ChEBI" id="CHEBI:30616"/>
        <dbReference type="ChEBI" id="CHEBI:61977"/>
        <dbReference type="ChEBI" id="CHEBI:456216"/>
        <dbReference type="EC" id="2.7.11.1"/>
    </reaction>
</comment>
<comment type="cofactor">
    <cofactor evidence="1">
        <name>Mg(2+)</name>
        <dbReference type="ChEBI" id="CHEBI:18420"/>
    </cofactor>
</comment>
<comment type="subcellular location">
    <subcellularLocation>
        <location evidence="2">Cell projection</location>
        <location evidence="2">Cilium</location>
    </subcellularLocation>
    <subcellularLocation>
        <location evidence="2">Cell projection</location>
        <location evidence="2">Cilium</location>
        <location evidence="2">Flagellum</location>
    </subcellularLocation>
</comment>
<comment type="alternative products">
    <event type="alternative splicing"/>
    <isoform>
        <id>Q7TSC3-1</id>
        <name>1</name>
        <sequence type="displayed"/>
    </isoform>
    <isoform>
        <id>Q7TSC3-2</id>
        <name>2</name>
        <sequence type="described" ref="VSP_021531 VSP_021532"/>
    </isoform>
    <isoform>
        <id>Q7TSC3-3</id>
        <name>3</name>
        <sequence type="described" ref="VSP_021533"/>
    </isoform>
</comment>
<comment type="similarity">
    <text evidence="7">Belongs to the protein kinase superfamily. NEK Ser/Thr protein kinase family. NIMA subfamily.</text>
</comment>
<proteinExistence type="evidence at transcript level"/>
<name>NEK5_MOUSE</name>
<keyword id="KW-0025">Alternative splicing</keyword>
<keyword id="KW-0067">ATP-binding</keyword>
<keyword id="KW-0966">Cell projection</keyword>
<keyword id="KW-0969">Cilium</keyword>
<keyword id="KW-0282">Flagellum</keyword>
<keyword id="KW-0418">Kinase</keyword>
<keyword id="KW-0460">Magnesium</keyword>
<keyword id="KW-0479">Metal-binding</keyword>
<keyword id="KW-0547">Nucleotide-binding</keyword>
<keyword id="KW-1185">Reference proteome</keyword>
<keyword id="KW-0723">Serine/threonine-protein kinase</keyword>
<keyword id="KW-0808">Transferase</keyword>
<feature type="chain" id="PRO_0000259766" description="Serine/threonine-protein kinase Nek5">
    <location>
        <begin position="1"/>
        <end position="627"/>
    </location>
</feature>
<feature type="domain" description="Protein kinase" evidence="3">
    <location>
        <begin position="4"/>
        <end position="255"/>
    </location>
</feature>
<feature type="region of interest" description="Disordered" evidence="5">
    <location>
        <begin position="563"/>
        <end position="582"/>
    </location>
</feature>
<feature type="region of interest" description="Disordered" evidence="5">
    <location>
        <begin position="591"/>
        <end position="627"/>
    </location>
</feature>
<feature type="compositionally biased region" description="Acidic residues" evidence="5">
    <location>
        <begin position="563"/>
        <end position="580"/>
    </location>
</feature>
<feature type="compositionally biased region" description="Basic and acidic residues" evidence="5">
    <location>
        <begin position="609"/>
        <end position="619"/>
    </location>
</feature>
<feature type="active site" description="Proton acceptor" evidence="3 4">
    <location>
        <position position="124"/>
    </location>
</feature>
<feature type="binding site" evidence="3">
    <location>
        <begin position="10"/>
        <end position="18"/>
    </location>
    <ligand>
        <name>ATP</name>
        <dbReference type="ChEBI" id="CHEBI:30616"/>
    </ligand>
</feature>
<feature type="binding site" evidence="3">
    <location>
        <position position="33"/>
    </location>
    <ligand>
        <name>ATP</name>
        <dbReference type="ChEBI" id="CHEBI:30616"/>
    </ligand>
</feature>
<feature type="splice variant" id="VSP_021531" description="In isoform 2." evidence="6">
    <original>SAAYLQRKFEAQQYKLKVERQLGLRPSSVEPHPNEGEKLQSH</original>
    <variation>WDHVTMSLKSMRGWLGVVAYRLPSLHKILPEFHPQCHKNEKF</variation>
    <location>
        <begin position="295"/>
        <end position="336"/>
    </location>
</feature>
<feature type="splice variant" id="VSP_021532" description="In isoform 2." evidence="6">
    <location>
        <begin position="337"/>
        <end position="627"/>
    </location>
</feature>
<feature type="splice variant" id="VSP_021533" description="In isoform 3." evidence="6">
    <original>IKFEESEDELRSEIIESLEKLAASTEEAEQAPSSSKNAEEPGEKEKTNLPVKKLQ</original>
    <variation>MQEGRGIKNSMPSSATSKIKASPGCMASCPNSVTPPPLQRKI</variation>
    <location>
        <begin position="573"/>
        <end position="627"/>
    </location>
</feature>
<evidence type="ECO:0000250" key="1"/>
<evidence type="ECO:0000250" key="2">
    <source>
        <dbReference type="UniProtKB" id="Q6P3R8"/>
    </source>
</evidence>
<evidence type="ECO:0000255" key="3">
    <source>
        <dbReference type="PROSITE-ProRule" id="PRU00159"/>
    </source>
</evidence>
<evidence type="ECO:0000255" key="4">
    <source>
        <dbReference type="PROSITE-ProRule" id="PRU10027"/>
    </source>
</evidence>
<evidence type="ECO:0000256" key="5">
    <source>
        <dbReference type="SAM" id="MobiDB-lite"/>
    </source>
</evidence>
<evidence type="ECO:0000303" key="6">
    <source>
    </source>
</evidence>
<evidence type="ECO:0000305" key="7"/>
<protein>
    <recommendedName>
        <fullName>Serine/threonine-protein kinase Nek5</fullName>
        <ecNumber>2.7.11.1</ecNumber>
    </recommendedName>
    <alternativeName>
        <fullName>Never in mitosis A-related kinase 5</fullName>
        <shortName>NimA-related protein kinase 5</shortName>
    </alternativeName>
</protein>
<dbReference type="EC" id="2.7.11.1"/>
<dbReference type="EMBL" id="AK032672">
    <property type="protein sequence ID" value="BAC27980.1"/>
    <property type="molecule type" value="mRNA"/>
</dbReference>
<dbReference type="EMBL" id="AK054168">
    <property type="protein sequence ID" value="BAC35677.1"/>
    <property type="molecule type" value="mRNA"/>
</dbReference>
<dbReference type="EMBL" id="BC053516">
    <property type="protein sequence ID" value="AAH53516.1"/>
    <property type="molecule type" value="mRNA"/>
</dbReference>
<dbReference type="CCDS" id="CCDS52518.1">
    <molecule id="Q7TSC3-3"/>
</dbReference>
<dbReference type="CCDS" id="CCDS85511.1">
    <molecule id="Q7TSC3-1"/>
</dbReference>
<dbReference type="RefSeq" id="NP_001334247.1">
    <molecule id="Q7TSC3-1"/>
    <property type="nucleotide sequence ID" value="NM_001347318.2"/>
</dbReference>
<dbReference type="RefSeq" id="NP_808566.2">
    <molecule id="Q7TSC3-3"/>
    <property type="nucleotide sequence ID" value="NM_177898.4"/>
</dbReference>
<dbReference type="SMR" id="Q7TSC3"/>
<dbReference type="FunCoup" id="Q7TSC3">
    <property type="interactions" value="237"/>
</dbReference>
<dbReference type="STRING" id="10090.ENSMUSP00000148211"/>
<dbReference type="GlyGen" id="Q7TSC3">
    <property type="glycosylation" value="1 site"/>
</dbReference>
<dbReference type="iPTMnet" id="Q7TSC3"/>
<dbReference type="PhosphoSitePlus" id="Q7TSC3"/>
<dbReference type="PaxDb" id="10090-ENSMUSP00000126705"/>
<dbReference type="ProteomicsDB" id="287364">
    <molecule id="Q7TSC3-1"/>
</dbReference>
<dbReference type="ProteomicsDB" id="287365">
    <molecule id="Q7TSC3-2"/>
</dbReference>
<dbReference type="ProteomicsDB" id="287366">
    <molecule id="Q7TSC3-3"/>
</dbReference>
<dbReference type="Antibodypedia" id="35078">
    <property type="antibodies" value="157 antibodies from 25 providers"/>
</dbReference>
<dbReference type="DNASU" id="330721"/>
<dbReference type="Ensembl" id="ENSMUST00000169834.2">
    <molecule id="Q7TSC3-3"/>
    <property type="protein sequence ID" value="ENSMUSP00000126705.2"/>
    <property type="gene ID" value="ENSMUSG00000037738.12"/>
</dbReference>
<dbReference type="Ensembl" id="ENSMUST00000209656.2">
    <molecule id="Q7TSC3-1"/>
    <property type="protein sequence ID" value="ENSMUSP00000148211.2"/>
    <property type="gene ID" value="ENSMUSG00000037738.12"/>
</dbReference>
<dbReference type="GeneID" id="330721"/>
<dbReference type="KEGG" id="mmu:330721"/>
<dbReference type="UCSC" id="uc009lco.1">
    <molecule id="Q7TSC3-3"/>
    <property type="organism name" value="mouse"/>
</dbReference>
<dbReference type="UCSC" id="uc009lcp.1">
    <molecule id="Q7TSC3-1"/>
    <property type="organism name" value="mouse"/>
</dbReference>
<dbReference type="UCSC" id="uc009lcq.1">
    <molecule id="Q7TSC3-2"/>
    <property type="organism name" value="mouse"/>
</dbReference>
<dbReference type="AGR" id="MGI:2142824"/>
<dbReference type="CTD" id="341676"/>
<dbReference type="MGI" id="MGI:2142824">
    <property type="gene designation" value="Nek5"/>
</dbReference>
<dbReference type="VEuPathDB" id="HostDB:ENSMUSG00000037738"/>
<dbReference type="eggNOG" id="KOG0589">
    <property type="taxonomic scope" value="Eukaryota"/>
</dbReference>
<dbReference type="GeneTree" id="ENSGT00940000160136"/>
<dbReference type="HOGENOM" id="CLU_000288_63_39_1"/>
<dbReference type="InParanoid" id="Q7TSC3"/>
<dbReference type="OMA" id="RQWDARA"/>
<dbReference type="OrthoDB" id="248923at2759"/>
<dbReference type="PhylomeDB" id="Q7TSC3"/>
<dbReference type="TreeFam" id="TF106472"/>
<dbReference type="BioGRID-ORCS" id="330721">
    <property type="hits" value="3 hits in 79 CRISPR screens"/>
</dbReference>
<dbReference type="PRO" id="PR:Q7TSC3"/>
<dbReference type="Proteomes" id="UP000000589">
    <property type="component" value="Chromosome 8"/>
</dbReference>
<dbReference type="RNAct" id="Q7TSC3">
    <property type="molecule type" value="protein"/>
</dbReference>
<dbReference type="Bgee" id="ENSMUSG00000037738">
    <property type="expression patterns" value="Expressed in choroid plexus epithelium and 56 other cell types or tissues"/>
</dbReference>
<dbReference type="ExpressionAtlas" id="Q7TSC3">
    <property type="expression patterns" value="baseline and differential"/>
</dbReference>
<dbReference type="GO" id="GO:0005929">
    <property type="term" value="C:cilium"/>
    <property type="evidence" value="ECO:0000250"/>
    <property type="project" value="UniProtKB"/>
</dbReference>
<dbReference type="GO" id="GO:0036126">
    <property type="term" value="C:sperm flagellum"/>
    <property type="evidence" value="ECO:0000250"/>
    <property type="project" value="UniProtKB"/>
</dbReference>
<dbReference type="GO" id="GO:0005524">
    <property type="term" value="F:ATP binding"/>
    <property type="evidence" value="ECO:0007669"/>
    <property type="project" value="UniProtKB-KW"/>
</dbReference>
<dbReference type="GO" id="GO:0046872">
    <property type="term" value="F:metal ion binding"/>
    <property type="evidence" value="ECO:0007669"/>
    <property type="project" value="UniProtKB-KW"/>
</dbReference>
<dbReference type="GO" id="GO:0004672">
    <property type="term" value="F:protein kinase activity"/>
    <property type="evidence" value="ECO:0000314"/>
    <property type="project" value="MGI"/>
</dbReference>
<dbReference type="GO" id="GO:0106310">
    <property type="term" value="F:protein serine kinase activity"/>
    <property type="evidence" value="ECO:0007669"/>
    <property type="project" value="RHEA"/>
</dbReference>
<dbReference type="GO" id="GO:0004674">
    <property type="term" value="F:protein serine/threonine kinase activity"/>
    <property type="evidence" value="ECO:0007669"/>
    <property type="project" value="UniProtKB-KW"/>
</dbReference>
<dbReference type="GO" id="GO:0051155">
    <property type="term" value="P:positive regulation of striated muscle cell differentiation"/>
    <property type="evidence" value="ECO:0000314"/>
    <property type="project" value="MGI"/>
</dbReference>
<dbReference type="CDD" id="cd08225">
    <property type="entry name" value="STKc_Nek5"/>
    <property type="match status" value="1"/>
</dbReference>
<dbReference type="FunFam" id="3.30.200.20:FF:000097">
    <property type="entry name" value="Probable serine/threonine-protein kinase nek1"/>
    <property type="match status" value="1"/>
</dbReference>
<dbReference type="FunFam" id="1.10.510.10:FF:000172">
    <property type="entry name" value="serine/threonine-protein kinase Nek1 isoform X1"/>
    <property type="match status" value="1"/>
</dbReference>
<dbReference type="Gene3D" id="3.30.200.20">
    <property type="entry name" value="Phosphorylase Kinase, domain 1"/>
    <property type="match status" value="1"/>
</dbReference>
<dbReference type="Gene3D" id="1.10.510.10">
    <property type="entry name" value="Transferase(Phosphotransferase) domain 1"/>
    <property type="match status" value="1"/>
</dbReference>
<dbReference type="InterPro" id="IPR011009">
    <property type="entry name" value="Kinase-like_dom_sf"/>
</dbReference>
<dbReference type="InterPro" id="IPR051131">
    <property type="entry name" value="NEK_Ser/Thr_kinase_NIMA"/>
</dbReference>
<dbReference type="InterPro" id="IPR000719">
    <property type="entry name" value="Prot_kinase_dom"/>
</dbReference>
<dbReference type="InterPro" id="IPR017441">
    <property type="entry name" value="Protein_kinase_ATP_BS"/>
</dbReference>
<dbReference type="InterPro" id="IPR008271">
    <property type="entry name" value="Ser/Thr_kinase_AS"/>
</dbReference>
<dbReference type="PANTHER" id="PTHR44899">
    <property type="entry name" value="CAMK FAMILY PROTEIN KINASE"/>
    <property type="match status" value="1"/>
</dbReference>
<dbReference type="PANTHER" id="PTHR44899:SF1">
    <property type="entry name" value="SERINE_THREONINE-PROTEIN KINASE NEK5"/>
    <property type="match status" value="1"/>
</dbReference>
<dbReference type="Pfam" id="PF00069">
    <property type="entry name" value="Pkinase"/>
    <property type="match status" value="1"/>
</dbReference>
<dbReference type="SMART" id="SM00220">
    <property type="entry name" value="S_TKc"/>
    <property type="match status" value="1"/>
</dbReference>
<dbReference type="SUPFAM" id="SSF56112">
    <property type="entry name" value="Protein kinase-like (PK-like)"/>
    <property type="match status" value="1"/>
</dbReference>
<dbReference type="PROSITE" id="PS00107">
    <property type="entry name" value="PROTEIN_KINASE_ATP"/>
    <property type="match status" value="1"/>
</dbReference>
<dbReference type="PROSITE" id="PS50011">
    <property type="entry name" value="PROTEIN_KINASE_DOM"/>
    <property type="match status" value="1"/>
</dbReference>
<dbReference type="PROSITE" id="PS00108">
    <property type="entry name" value="PROTEIN_KINASE_ST"/>
    <property type="match status" value="1"/>
</dbReference>